<protein>
    <recommendedName>
        <fullName evidence="3">10-epi-cubebol synthase</fullName>
        <ecNumber evidence="2">4.2.3.175</ecNumber>
    </recommendedName>
</protein>
<feature type="chain" id="PRO_0000449804" description="10-epi-cubebol synthase">
    <location>
        <begin position="1"/>
        <end position="315"/>
    </location>
</feature>
<feature type="short sequence motif" description="DDXXD motif" evidence="1">
    <location>
        <begin position="79"/>
        <end position="83"/>
    </location>
</feature>
<feature type="short sequence motif" description="NXXXSXXXE motif" evidence="1">
    <location>
        <begin position="220"/>
        <end position="228"/>
    </location>
</feature>
<feature type="binding site" evidence="1">
    <location>
        <position position="79"/>
    </location>
    <ligand>
        <name>Mg(2+)</name>
        <dbReference type="ChEBI" id="CHEBI:18420"/>
        <label>1</label>
    </ligand>
</feature>
<feature type="binding site" evidence="1">
    <location>
        <position position="79"/>
    </location>
    <ligand>
        <name>Mg(2+)</name>
        <dbReference type="ChEBI" id="CHEBI:18420"/>
        <label>2</label>
    </ligand>
</feature>
<feature type="binding site" evidence="1">
    <location>
        <position position="220"/>
    </location>
    <ligand>
        <name>Mg(2+)</name>
        <dbReference type="ChEBI" id="CHEBI:18420"/>
        <label>3</label>
    </ligand>
</feature>
<feature type="binding site" evidence="1">
    <location>
        <position position="224"/>
    </location>
    <ligand>
        <name>Mg(2+)</name>
        <dbReference type="ChEBI" id="CHEBI:18420"/>
        <label>3</label>
    </ligand>
</feature>
<feature type="binding site" evidence="1">
    <location>
        <position position="228"/>
    </location>
    <ligand>
        <name>Mg(2+)</name>
        <dbReference type="ChEBI" id="CHEBI:18420"/>
        <label>3</label>
    </ligand>
</feature>
<feature type="helix" evidence="6">
    <location>
        <begin position="18"/>
        <end position="31"/>
    </location>
</feature>
<feature type="helix" evidence="6">
    <location>
        <begin position="40"/>
        <end position="56"/>
    </location>
</feature>
<feature type="helix" evidence="6">
    <location>
        <begin position="62"/>
        <end position="87"/>
    </location>
</feature>
<feature type="helix" evidence="6">
    <location>
        <begin position="92"/>
        <end position="103"/>
    </location>
</feature>
<feature type="helix" evidence="6">
    <location>
        <begin position="104"/>
        <end position="107"/>
    </location>
</feature>
<feature type="helix" evidence="6">
    <location>
        <begin position="117"/>
        <end position="130"/>
    </location>
</feature>
<feature type="helix" evidence="6">
    <location>
        <begin position="135"/>
        <end position="160"/>
    </location>
</feature>
<feature type="helix" evidence="6">
    <location>
        <begin position="167"/>
        <end position="177"/>
    </location>
</feature>
<feature type="helix" evidence="6">
    <location>
        <begin position="180"/>
        <end position="191"/>
    </location>
</feature>
<feature type="helix" evidence="6">
    <location>
        <begin position="197"/>
        <end position="200"/>
    </location>
</feature>
<feature type="helix" evidence="6">
    <location>
        <begin position="203"/>
        <end position="223"/>
    </location>
</feature>
<feature type="helix" evidence="6">
    <location>
        <begin position="225"/>
        <end position="230"/>
    </location>
</feature>
<feature type="helix" evidence="6">
    <location>
        <begin position="237"/>
        <end position="245"/>
    </location>
</feature>
<feature type="helix" evidence="6">
    <location>
        <begin position="249"/>
        <end position="270"/>
    </location>
</feature>
<feature type="helix" evidence="6">
    <location>
        <begin position="271"/>
        <end position="273"/>
    </location>
</feature>
<feature type="helix" evidence="6">
    <location>
        <begin position="279"/>
        <end position="303"/>
    </location>
</feature>
<sequence>MHRALLCPFPATTPHPQAAQLANDCLEWTRKCGLLPDESPRTLDKVRSYSALAAHCYPDAHFERLRAICDYYSWLFFFDDVCENTSLNGAEPKVVSSLLFDVYGVLRGPTAAVGHAPFAQALADIWRRIGDGCPGFWRRRLIRHVENYIDGCVWEAQNRQLDRVPSRAVFEGMRMHTSTMYEFWDFIEYAGDLFLPDEVVEHPLVAEVRRAGNAIASFANDIYSLRKETSNRDVHNLVVVLMHEERIELEAAYARAAGIHDAQVEHFLDLVKHLPTFSATIDRNLARYVEGIRIWIRANHDWSIVTPRYNEPDAR</sequence>
<proteinExistence type="evidence at protein level"/>
<comment type="function">
    <text evidence="2">Catalyzes the cyclization of farnesyl diphosphate (FPP) to 10-epi-cubebol. Is also responsible for the formation of many other sesquiterpenes, mainly cadalanes and cubebanes, including 1,10-di-epi-cubebol and the cadalanes delta-cadinene, T-cadinol and alpha-cadinol.</text>
</comment>
<comment type="catalytic activity">
    <reaction evidence="2">
        <text>(2E,6E)-farnesyl diphosphate + H2O = 10-epi-cubebol + diphosphate</text>
        <dbReference type="Rhea" id="RHEA:54064"/>
        <dbReference type="ChEBI" id="CHEBI:15377"/>
        <dbReference type="ChEBI" id="CHEBI:33019"/>
        <dbReference type="ChEBI" id="CHEBI:138045"/>
        <dbReference type="ChEBI" id="CHEBI:175763"/>
        <dbReference type="EC" id="4.2.3.175"/>
    </reaction>
</comment>
<comment type="cofactor">
    <cofactor evidence="1">
        <name>Mg(2+)</name>
        <dbReference type="ChEBI" id="CHEBI:18420"/>
    </cofactor>
    <text evidence="1">Binds 3 Mg(2+) ions per subunit.</text>
</comment>
<comment type="similarity">
    <text evidence="4">Belongs to the terpene synthase family.</text>
</comment>
<gene>
    <name evidence="5" type="ordered locus">sce6369</name>
</gene>
<organism>
    <name type="scientific">Sorangium cellulosum (strain So ce56)</name>
    <name type="common">Polyangium cellulosum (strain So ce56)</name>
    <dbReference type="NCBI Taxonomy" id="448385"/>
    <lineage>
        <taxon>Bacteria</taxon>
        <taxon>Pseudomonadati</taxon>
        <taxon>Myxococcota</taxon>
        <taxon>Polyangia</taxon>
        <taxon>Polyangiales</taxon>
        <taxon>Polyangiaceae</taxon>
        <taxon>Sorangium</taxon>
    </lineage>
</organism>
<reference key="1">
    <citation type="journal article" date="2007" name="Nat. Biotechnol.">
        <title>Complete genome sequence of the myxobacterium Sorangium cellulosum.</title>
        <authorList>
            <person name="Schneiker S."/>
            <person name="Perlova O."/>
            <person name="Kaiser O."/>
            <person name="Gerth K."/>
            <person name="Alici A."/>
            <person name="Altmeyer M.O."/>
            <person name="Bartels D."/>
            <person name="Bekel T."/>
            <person name="Beyer S."/>
            <person name="Bode E."/>
            <person name="Bode H.B."/>
            <person name="Bolten C.J."/>
            <person name="Choudhuri J.V."/>
            <person name="Doss S."/>
            <person name="Elnakady Y.A."/>
            <person name="Frank B."/>
            <person name="Gaigalat L."/>
            <person name="Goesmann A."/>
            <person name="Groeger C."/>
            <person name="Gross F."/>
            <person name="Jelsbak L."/>
            <person name="Jelsbak L."/>
            <person name="Kalinowski J."/>
            <person name="Kegler C."/>
            <person name="Knauber T."/>
            <person name="Konietzny S."/>
            <person name="Kopp M."/>
            <person name="Krause L."/>
            <person name="Krug D."/>
            <person name="Linke B."/>
            <person name="Mahmud T."/>
            <person name="Martinez-Arias R."/>
            <person name="McHardy A.C."/>
            <person name="Merai M."/>
            <person name="Meyer F."/>
            <person name="Mormann S."/>
            <person name="Munoz-Dorado J."/>
            <person name="Perez J."/>
            <person name="Pradella S."/>
            <person name="Rachid S."/>
            <person name="Raddatz G."/>
            <person name="Rosenau F."/>
            <person name="Rueckert C."/>
            <person name="Sasse F."/>
            <person name="Scharfe M."/>
            <person name="Schuster S.C."/>
            <person name="Suen G."/>
            <person name="Treuner-Lange A."/>
            <person name="Velicer G.J."/>
            <person name="Vorholter F.-J."/>
            <person name="Weissman K.J."/>
            <person name="Welch R.D."/>
            <person name="Wenzel S.C."/>
            <person name="Whitworth D.E."/>
            <person name="Wilhelm S."/>
            <person name="Wittmann C."/>
            <person name="Bloecker H."/>
            <person name="Puehler A."/>
            <person name="Mueller R."/>
        </authorList>
    </citation>
    <scope>NUCLEOTIDE SEQUENCE [LARGE SCALE GENOMIC DNA]</scope>
    <source>
        <strain>So ce56</strain>
    </source>
</reference>
<reference key="2">
    <citation type="journal article" date="2016" name="Org. Biomol. Chem.">
        <title>A single terpene synthase is responsible for a wide variety of sesquiterpenes in Sorangium cellulosum Soce56.</title>
        <authorList>
            <person name="Schifrin A."/>
            <person name="Khatri Y."/>
            <person name="Kirsch P."/>
            <person name="Thiel V."/>
            <person name="Schulz S."/>
            <person name="Bernhardt R."/>
        </authorList>
    </citation>
    <scope>FUNCTION</scope>
    <scope>CATALYTIC ACTIVITY</scope>
    <source>
        <strain>So ce56</strain>
    </source>
</reference>
<accession>A9GK58</accession>
<name>ECUBS_SORC5</name>
<evidence type="ECO:0000250" key="1">
    <source>
        <dbReference type="UniProtKB" id="B5GMG2"/>
    </source>
</evidence>
<evidence type="ECO:0000269" key="2">
    <source>
    </source>
</evidence>
<evidence type="ECO:0000303" key="3">
    <source>
    </source>
</evidence>
<evidence type="ECO:0000305" key="4"/>
<evidence type="ECO:0000312" key="5">
    <source>
        <dbReference type="EMBL" id="CAN96536.1"/>
    </source>
</evidence>
<evidence type="ECO:0007829" key="6">
    <source>
        <dbReference type="PDB" id="7ZRN"/>
    </source>
</evidence>
<dbReference type="EC" id="4.2.3.175" evidence="2"/>
<dbReference type="EMBL" id="AM746676">
    <property type="protein sequence ID" value="CAN96536.1"/>
    <property type="molecule type" value="Genomic_DNA"/>
</dbReference>
<dbReference type="PDB" id="7ZRN">
    <property type="method" value="X-ray"/>
    <property type="resolution" value="1.82 A"/>
    <property type="chains" value="A/B=1-315"/>
</dbReference>
<dbReference type="PDBsum" id="7ZRN"/>
<dbReference type="SMR" id="A9GK58"/>
<dbReference type="STRING" id="448385.sce6369"/>
<dbReference type="KEGG" id="scl:sce6369"/>
<dbReference type="eggNOG" id="COG0664">
    <property type="taxonomic scope" value="Bacteria"/>
</dbReference>
<dbReference type="HOGENOM" id="CLU_042538_2_1_7"/>
<dbReference type="BRENDA" id="4.2.3.175">
    <property type="organism ID" value="9327"/>
</dbReference>
<dbReference type="Proteomes" id="UP000002139">
    <property type="component" value="Chromosome"/>
</dbReference>
<dbReference type="GO" id="GO:0046872">
    <property type="term" value="F:metal ion binding"/>
    <property type="evidence" value="ECO:0007669"/>
    <property type="project" value="UniProtKB-KW"/>
</dbReference>
<dbReference type="GO" id="GO:0010333">
    <property type="term" value="F:terpene synthase activity"/>
    <property type="evidence" value="ECO:0007669"/>
    <property type="project" value="InterPro"/>
</dbReference>
<dbReference type="Gene3D" id="1.10.600.10">
    <property type="entry name" value="Farnesyl Diphosphate Synthase"/>
    <property type="match status" value="1"/>
</dbReference>
<dbReference type="InterPro" id="IPR008949">
    <property type="entry name" value="Isoprenoid_synthase_dom_sf"/>
</dbReference>
<dbReference type="InterPro" id="IPR034686">
    <property type="entry name" value="Terpene_cyclase-like_2"/>
</dbReference>
<dbReference type="PANTHER" id="PTHR35201:SF4">
    <property type="entry name" value="BETA-PINACENE SYNTHASE-RELATED"/>
    <property type="match status" value="1"/>
</dbReference>
<dbReference type="PANTHER" id="PTHR35201">
    <property type="entry name" value="TERPENE SYNTHASE"/>
    <property type="match status" value="1"/>
</dbReference>
<dbReference type="Pfam" id="PF19086">
    <property type="entry name" value="Terpene_syn_C_2"/>
    <property type="match status" value="1"/>
</dbReference>
<dbReference type="SFLD" id="SFLDS00005">
    <property type="entry name" value="Isoprenoid_Synthase_Type_I"/>
    <property type="match status" value="1"/>
</dbReference>
<dbReference type="SFLD" id="SFLDG01020">
    <property type="entry name" value="Terpene_Cyclase_Like_2"/>
    <property type="match status" value="1"/>
</dbReference>
<dbReference type="SUPFAM" id="SSF48576">
    <property type="entry name" value="Terpenoid synthases"/>
    <property type="match status" value="1"/>
</dbReference>
<keyword id="KW-0002">3D-structure</keyword>
<keyword id="KW-0456">Lyase</keyword>
<keyword id="KW-0460">Magnesium</keyword>
<keyword id="KW-0479">Metal-binding</keyword>
<keyword id="KW-1185">Reference proteome</keyword>